<evidence type="ECO:0000250" key="1">
    <source>
        <dbReference type="UniProtKB" id="L0E2Z4"/>
    </source>
</evidence>
<evidence type="ECO:0000250" key="2">
    <source>
        <dbReference type="UniProtKB" id="O93868"/>
    </source>
</evidence>
<evidence type="ECO:0000269" key="3">
    <source>
    </source>
</evidence>
<evidence type="ECO:0000303" key="4">
    <source>
    </source>
</evidence>
<evidence type="ECO:0000305" key="5"/>
<keyword id="KW-0521">NADP</keyword>
<keyword id="KW-0560">Oxidoreductase</keyword>
<keyword id="KW-1185">Reference proteome</keyword>
<name>CHYC_PENRW</name>
<organism>
    <name type="scientific">Penicillium rubens (strain ATCC 28089 / DSM 1075 / NRRL 1951 / Wisconsin 54-1255)</name>
    <name type="common">Penicillium chrysogenum</name>
    <dbReference type="NCBI Taxonomy" id="500485"/>
    <lineage>
        <taxon>Eukaryota</taxon>
        <taxon>Fungi</taxon>
        <taxon>Dikarya</taxon>
        <taxon>Ascomycota</taxon>
        <taxon>Pezizomycotina</taxon>
        <taxon>Eurotiomycetes</taxon>
        <taxon>Eurotiomycetidae</taxon>
        <taxon>Eurotiales</taxon>
        <taxon>Aspergillaceae</taxon>
        <taxon>Penicillium</taxon>
        <taxon>Penicillium chrysogenum species complex</taxon>
    </lineage>
</organism>
<dbReference type="EC" id="1.1.1.-" evidence="3"/>
<dbReference type="EMBL" id="AM920436">
    <property type="protein sequence ID" value="CAP96157.1"/>
    <property type="molecule type" value="Genomic_DNA"/>
</dbReference>
<dbReference type="RefSeq" id="XP_002568287.1">
    <property type="nucleotide sequence ID" value="XM_002568241.1"/>
</dbReference>
<dbReference type="SMR" id="B6HLP6"/>
<dbReference type="STRING" id="500485.B6HLP6"/>
<dbReference type="GeneID" id="8306446"/>
<dbReference type="KEGG" id="pcs:N7525_007828"/>
<dbReference type="VEuPathDB" id="FungiDB:PCH_Pc21g12600"/>
<dbReference type="eggNOG" id="KOG1208">
    <property type="taxonomic scope" value="Eukaryota"/>
</dbReference>
<dbReference type="HOGENOM" id="CLU_010194_44_5_1"/>
<dbReference type="OMA" id="NHTVYLH"/>
<dbReference type="OrthoDB" id="191139at2759"/>
<dbReference type="BioCyc" id="PCHR:PC21G12600-MONOMER"/>
<dbReference type="Proteomes" id="UP000000724">
    <property type="component" value="Contig Pc00c21"/>
</dbReference>
<dbReference type="GO" id="GO:0016491">
    <property type="term" value="F:oxidoreductase activity"/>
    <property type="evidence" value="ECO:0007669"/>
    <property type="project" value="UniProtKB-KW"/>
</dbReference>
<dbReference type="Gene3D" id="3.40.50.720">
    <property type="entry name" value="NAD(P)-binding Rossmann-like Domain"/>
    <property type="match status" value="1"/>
</dbReference>
<dbReference type="InterPro" id="IPR036291">
    <property type="entry name" value="NAD(P)-bd_dom_sf"/>
</dbReference>
<dbReference type="InterPro" id="IPR002347">
    <property type="entry name" value="SDR_fam"/>
</dbReference>
<dbReference type="PANTHER" id="PTHR43157:SF31">
    <property type="entry name" value="PHOSPHATIDYLINOSITOL-GLYCAN BIOSYNTHESIS CLASS F PROTEIN"/>
    <property type="match status" value="1"/>
</dbReference>
<dbReference type="PANTHER" id="PTHR43157">
    <property type="entry name" value="PHOSPHATIDYLINOSITOL-GLYCAN BIOSYNTHESIS CLASS F PROTEIN-RELATED"/>
    <property type="match status" value="1"/>
</dbReference>
<dbReference type="Pfam" id="PF00106">
    <property type="entry name" value="adh_short"/>
    <property type="match status" value="1"/>
</dbReference>
<dbReference type="PRINTS" id="PR00081">
    <property type="entry name" value="GDHRDH"/>
</dbReference>
<dbReference type="SUPFAM" id="SSF51735">
    <property type="entry name" value="NAD(P)-binding Rossmann-fold domains"/>
    <property type="match status" value="1"/>
</dbReference>
<accession>B6HLP6</accession>
<feature type="chain" id="PRO_0000443346" description="Short-chain dehydrogenase chyC">
    <location>
        <begin position="1"/>
        <end position="258"/>
    </location>
</feature>
<feature type="active site" description="Proton donor" evidence="2">
    <location>
        <position position="154"/>
    </location>
</feature>
<feature type="active site" description="Lowers pKa of active site Tyr" evidence="2">
    <location>
        <position position="158"/>
    </location>
</feature>
<feature type="binding site" evidence="1">
    <location>
        <position position="37"/>
    </location>
    <ligand>
        <name>NADP(+)</name>
        <dbReference type="ChEBI" id="CHEBI:58349"/>
    </ligand>
</feature>
<feature type="binding site" evidence="1">
    <location>
        <position position="55"/>
    </location>
    <ligand>
        <name>NADP(+)</name>
        <dbReference type="ChEBI" id="CHEBI:58349"/>
    </ligand>
</feature>
<feature type="binding site" evidence="2">
    <location>
        <position position="81"/>
    </location>
    <ligand>
        <name>NADP(+)</name>
        <dbReference type="ChEBI" id="CHEBI:58349"/>
    </ligand>
</feature>
<feature type="binding site" evidence="2">
    <location>
        <position position="154"/>
    </location>
    <ligand>
        <name>NADP(+)</name>
        <dbReference type="ChEBI" id="CHEBI:58349"/>
    </ligand>
</feature>
<feature type="binding site" evidence="2">
    <location>
        <position position="158"/>
    </location>
    <ligand>
        <name>NADP(+)</name>
        <dbReference type="ChEBI" id="CHEBI:58349"/>
    </ligand>
</feature>
<feature type="binding site" evidence="2">
    <location>
        <position position="185"/>
    </location>
    <ligand>
        <name>NADP(+)</name>
        <dbReference type="ChEBI" id="CHEBI:58349"/>
    </ligand>
</feature>
<feature type="binding site" evidence="1">
    <location>
        <position position="187"/>
    </location>
    <ligand>
        <name>NADP(+)</name>
        <dbReference type="ChEBI" id="CHEBI:58349"/>
    </ligand>
</feature>
<comment type="function">
    <text evidence="3">Short-chain dehydrogenase; part of the gene cluster that mediates the biosynthesis of the yellow pigment chrysogine (PubMed:29196288). the NRPS chyA mediates the condensation of anthranilic acid and alanine into the intermediate 2-(2-aminopropanamido)benzoic acid (PubMed:29196288). The remainder of the pathway is highly branched yielding at least 13 chrysogine-related compounds (PubMed:29196288). The malonyl transferase chyE converts 2-(2-aminopropanamido)benzoic acid and 2-(2-aminopropanamido)benzamidine into 2-(2-(2-carboxyacetamido)propanamido)benzoic acid and 3-((1-((2-carbamoylphenyl)amino)-1-oxopropan-2-yl)amino)-3-oxopropanoic acid, respectively (PubMed:29196288). ChyD is an amidase, being responsible for the amidation of the carboxylic acid moiety of 2-(2-aminopropanamido)benzoic acid, 2-(2-(2-carboxyacetamido)propanamido)benzoic acid and 2-(2-((4-amino-1-carboxy-4-oxobutyl)amino)propanamido)benzoic acid (PubMed:29196288). ChyC is involved in the same reactions as ChyD, but plays a more minor role in the amidation reactions compared to chyD (PubMed:29196288). The oxidoreductases chyH and chyM are involved in oxidation reactions that form N-pyruvoylanthranilamide from 2-(2-aminopropanamido)benzamidine and (1-((2-carbamoylphenyl)amino)-1-oxopropan-2-yl)glutamine, respectively (PubMed:29196288). N-pyruvoylanthranilamide is further converted via two further branches in the pathway, yielding chrysogine and additional chrysogine-related coumpounds (PubMed:29196288). Chrysogine is likely formed by a spontaneous ring closure from N-pyruvoylanthranilamide (PubMed:29196288).</text>
</comment>
<comment type="disruption phenotype">
    <text evidence="3">Accumulates 2-(2-aminopropanamido)benzoic acid, 2-(2-(2-carboxyacetamido)propanamido)benzoic acid and 2-(2-((4-amino-1-carboxy-4-oxobutyl)amino)propanamido)benzoic acid, but downstream compounds are still produced in low amount (PubMed:29196288).</text>
</comment>
<comment type="similarity">
    <text evidence="5">Belongs to the short-chain dehydrogenases/reductases (SDR) family.</text>
</comment>
<protein>
    <recommendedName>
        <fullName evidence="5">Short-chain dehydrogenase chyC</fullName>
        <ecNumber evidence="3">1.1.1.-</ecNumber>
    </recommendedName>
    <alternativeName>
        <fullName evidence="4">Chrysogine biosynthesis cluster protein C</fullName>
    </alternativeName>
</protein>
<sequence>MARILITGSTDGFGLEAARQLVDRKHVVYLHARSQERAEEVKTKCPGAAGVLVADLTSVAETRKLAEEANAIGTFDAIILNAGLLYGPFRKTDYGVPAMPFVNVLAPYILSCLLEQPKRLIFIASILHKEAKTDLKDIFWLERGEKEFQDFPAYCDSKFHVMLLANAVAKRFKGTSVTSVHPGYVATKLGGSGATDKMEDGVETYVMLAEGDYDQSLTGVYFVPKKQIGEPLPETTQEDLQETVVKACEDITGIKLPA</sequence>
<reference key="1">
    <citation type="journal article" date="2008" name="Nat. Biotechnol.">
        <title>Genome sequencing and analysis of the filamentous fungus Penicillium chrysogenum.</title>
        <authorList>
            <person name="van den Berg M.A."/>
            <person name="Albang R."/>
            <person name="Albermann K."/>
            <person name="Badger J.H."/>
            <person name="Daran J.-M."/>
            <person name="Driessen A.J.M."/>
            <person name="Garcia-Estrada C."/>
            <person name="Fedorova N.D."/>
            <person name="Harris D.M."/>
            <person name="Heijne W.H.M."/>
            <person name="Joardar V.S."/>
            <person name="Kiel J.A.K.W."/>
            <person name="Kovalchuk A."/>
            <person name="Martin J.F."/>
            <person name="Nierman W.C."/>
            <person name="Nijland J.G."/>
            <person name="Pronk J.T."/>
            <person name="Roubos J.A."/>
            <person name="van der Klei I.J."/>
            <person name="van Peij N.N.M.E."/>
            <person name="Veenhuis M."/>
            <person name="von Doehren H."/>
            <person name="Wagner C."/>
            <person name="Wortman J.R."/>
            <person name="Bovenberg R.A.L."/>
        </authorList>
    </citation>
    <scope>NUCLEOTIDE SEQUENCE [LARGE SCALE GENOMIC DNA]</scope>
    <source>
        <strain>ATCC 28089 / DSM 1075 / NRRL 1951 / Wisconsin 54-1255</strain>
    </source>
</reference>
<reference key="2">
    <citation type="journal article" date="2017" name="Appl. Environ. Microbiol.">
        <title>Elucidation of the biosynthetic pathway for the production of the pigment chrysogine by Penicillium chrysogenum.</title>
        <authorList>
            <person name="Viggiano A."/>
            <person name="Salo O."/>
            <person name="Ali H."/>
            <person name="Szymanski W."/>
            <person name="Lankhorst P.P."/>
            <person name="Nygaard Y."/>
            <person name="Bovenberg R.A.L."/>
            <person name="Driessen A.J.M."/>
        </authorList>
    </citation>
    <scope>FUNCTION</scope>
    <scope>DISRUPTION PHENOTYPE</scope>
</reference>
<proteinExistence type="inferred from homology"/>
<gene>
    <name evidence="4" type="primary">chyC</name>
    <name type="ORF">Pc21g12600</name>
</gene>